<organism>
    <name type="scientific">Staphylococcus aureus</name>
    <dbReference type="NCBI Taxonomy" id="1280"/>
    <lineage>
        <taxon>Bacteria</taxon>
        <taxon>Bacillati</taxon>
        <taxon>Bacillota</taxon>
        <taxon>Bacilli</taxon>
        <taxon>Bacillales</taxon>
        <taxon>Staphylococcaceae</taxon>
        <taxon>Staphylococcus</taxon>
    </lineage>
</organism>
<accession>P68786</accession>
<accession>O33276</accession>
<reference key="1">
    <citation type="submission" date="1997-11" db="EMBL/GenBank/DDBJ databases">
        <title>Ribosome recycling factor (frr) gene of S. aureus.</title>
        <authorList>
            <person name="Lowe A.M."/>
            <person name="Deresiewicz R.L."/>
        </authorList>
    </citation>
    <scope>NUCLEOTIDE SEQUENCE [GENOMIC DNA]</scope>
</reference>
<comment type="function">
    <text evidence="1">Responsible for the release of ribosomes from messenger RNA at the termination of protein biosynthesis. May increase the efficiency of translation by recycling ribosomes from one round of translation to another.</text>
</comment>
<comment type="subcellular location">
    <subcellularLocation>
        <location evidence="1">Cytoplasm</location>
    </subcellularLocation>
</comment>
<comment type="similarity">
    <text evidence="1">Belongs to the RRF family.</text>
</comment>
<keyword id="KW-0963">Cytoplasm</keyword>
<keyword id="KW-0648">Protein biosynthesis</keyword>
<evidence type="ECO:0000255" key="1">
    <source>
        <dbReference type="HAMAP-Rule" id="MF_00040"/>
    </source>
</evidence>
<evidence type="ECO:0000256" key="2">
    <source>
        <dbReference type="SAM" id="MobiDB-lite"/>
    </source>
</evidence>
<gene>
    <name evidence="1" type="primary">frr</name>
</gene>
<sequence>MSDIINETKSRMQKSIESLSRELANISAGRANSNLLNGVTVDYYGAPTPVQQLASINVPEARLLVISPYDKTSVADIEKAIIAANLGVNPTSDGEVIRIAVPALTEERRKERVKDVKKIGEEAKVSVRNIRRDMNDQLKKDEKNGDITEDELRSGTEDVQKATDNSIKEIDQMIADKEKDIMSV</sequence>
<proteinExistence type="inferred from homology"/>
<protein>
    <recommendedName>
        <fullName evidence="1">Ribosome-recycling factor</fullName>
        <shortName evidence="1">RRF</shortName>
    </recommendedName>
    <alternativeName>
        <fullName evidence="1">Ribosome-releasing factor</fullName>
    </alternativeName>
</protein>
<name>RRF_STAAU</name>
<feature type="chain" id="PRO_0000167543" description="Ribosome-recycling factor">
    <location>
        <begin position="1"/>
        <end position="184"/>
    </location>
</feature>
<feature type="region of interest" description="Disordered" evidence="2">
    <location>
        <begin position="134"/>
        <end position="167"/>
    </location>
</feature>
<dbReference type="EMBL" id="AF033018">
    <property type="protein sequence ID" value="AAB87473.1"/>
    <property type="molecule type" value="Genomic_DNA"/>
</dbReference>
<dbReference type="RefSeq" id="WP_001280006.1">
    <property type="nucleotide sequence ID" value="NZ_WYDB01000002.1"/>
</dbReference>
<dbReference type="SMR" id="P68786"/>
<dbReference type="OMA" id="FNPMNNG"/>
<dbReference type="GO" id="GO:0005737">
    <property type="term" value="C:cytoplasm"/>
    <property type="evidence" value="ECO:0007669"/>
    <property type="project" value="UniProtKB-SubCell"/>
</dbReference>
<dbReference type="GO" id="GO:0043023">
    <property type="term" value="F:ribosomal large subunit binding"/>
    <property type="evidence" value="ECO:0007669"/>
    <property type="project" value="TreeGrafter"/>
</dbReference>
<dbReference type="GO" id="GO:0006415">
    <property type="term" value="P:translational termination"/>
    <property type="evidence" value="ECO:0007669"/>
    <property type="project" value="UniProtKB-UniRule"/>
</dbReference>
<dbReference type="CDD" id="cd00520">
    <property type="entry name" value="RRF"/>
    <property type="match status" value="1"/>
</dbReference>
<dbReference type="FunFam" id="1.10.132.20:FF:000001">
    <property type="entry name" value="Ribosome-recycling factor"/>
    <property type="match status" value="1"/>
</dbReference>
<dbReference type="FunFam" id="3.30.1360.40:FF:000001">
    <property type="entry name" value="Ribosome-recycling factor"/>
    <property type="match status" value="1"/>
</dbReference>
<dbReference type="Gene3D" id="3.30.1360.40">
    <property type="match status" value="1"/>
</dbReference>
<dbReference type="Gene3D" id="1.10.132.20">
    <property type="entry name" value="Ribosome-recycling factor"/>
    <property type="match status" value="1"/>
</dbReference>
<dbReference type="HAMAP" id="MF_00040">
    <property type="entry name" value="RRF"/>
    <property type="match status" value="1"/>
</dbReference>
<dbReference type="InterPro" id="IPR002661">
    <property type="entry name" value="Ribosome_recyc_fac"/>
</dbReference>
<dbReference type="InterPro" id="IPR023584">
    <property type="entry name" value="Ribosome_recyc_fac_dom"/>
</dbReference>
<dbReference type="InterPro" id="IPR036191">
    <property type="entry name" value="RRF_sf"/>
</dbReference>
<dbReference type="NCBIfam" id="TIGR00496">
    <property type="entry name" value="frr"/>
    <property type="match status" value="1"/>
</dbReference>
<dbReference type="PANTHER" id="PTHR20982:SF3">
    <property type="entry name" value="MITOCHONDRIAL RIBOSOME RECYCLING FACTOR PSEUDO 1"/>
    <property type="match status" value="1"/>
</dbReference>
<dbReference type="PANTHER" id="PTHR20982">
    <property type="entry name" value="RIBOSOME RECYCLING FACTOR"/>
    <property type="match status" value="1"/>
</dbReference>
<dbReference type="Pfam" id="PF01765">
    <property type="entry name" value="RRF"/>
    <property type="match status" value="1"/>
</dbReference>
<dbReference type="SUPFAM" id="SSF55194">
    <property type="entry name" value="Ribosome recycling factor, RRF"/>
    <property type="match status" value="1"/>
</dbReference>